<protein>
    <recommendedName>
        <fullName evidence="1">Histidinol dehydrogenase</fullName>
        <shortName evidence="1">HDH</shortName>
        <ecNumber evidence="1">1.1.1.23</ecNumber>
    </recommendedName>
</protein>
<proteinExistence type="inferred from homology"/>
<dbReference type="EC" id="1.1.1.23" evidence="1"/>
<dbReference type="EMBL" id="CR628337">
    <property type="protein sequence ID" value="CAH15446.1"/>
    <property type="molecule type" value="Genomic_DNA"/>
</dbReference>
<dbReference type="RefSeq" id="WP_011215300.1">
    <property type="nucleotide sequence ID" value="NC_006369.1"/>
</dbReference>
<dbReference type="SMR" id="Q5WX91"/>
<dbReference type="KEGG" id="lpf:lpl1207"/>
<dbReference type="LegioList" id="lpl1207"/>
<dbReference type="HOGENOM" id="CLU_006732_3_0_6"/>
<dbReference type="UniPathway" id="UPA00031">
    <property type="reaction ID" value="UER00014"/>
</dbReference>
<dbReference type="Proteomes" id="UP000002517">
    <property type="component" value="Chromosome"/>
</dbReference>
<dbReference type="GO" id="GO:0005829">
    <property type="term" value="C:cytosol"/>
    <property type="evidence" value="ECO:0007669"/>
    <property type="project" value="TreeGrafter"/>
</dbReference>
<dbReference type="GO" id="GO:0004399">
    <property type="term" value="F:histidinol dehydrogenase activity"/>
    <property type="evidence" value="ECO:0007669"/>
    <property type="project" value="UniProtKB-UniRule"/>
</dbReference>
<dbReference type="GO" id="GO:0051287">
    <property type="term" value="F:NAD binding"/>
    <property type="evidence" value="ECO:0007669"/>
    <property type="project" value="InterPro"/>
</dbReference>
<dbReference type="GO" id="GO:0008270">
    <property type="term" value="F:zinc ion binding"/>
    <property type="evidence" value="ECO:0007669"/>
    <property type="project" value="UniProtKB-UniRule"/>
</dbReference>
<dbReference type="GO" id="GO:0000105">
    <property type="term" value="P:L-histidine biosynthetic process"/>
    <property type="evidence" value="ECO:0007669"/>
    <property type="project" value="UniProtKB-UniRule"/>
</dbReference>
<dbReference type="CDD" id="cd06572">
    <property type="entry name" value="Histidinol_dh"/>
    <property type="match status" value="1"/>
</dbReference>
<dbReference type="FunFam" id="3.40.50.1980:FF:000001">
    <property type="entry name" value="Histidinol dehydrogenase"/>
    <property type="match status" value="1"/>
</dbReference>
<dbReference type="Gene3D" id="1.20.5.1300">
    <property type="match status" value="1"/>
</dbReference>
<dbReference type="Gene3D" id="3.40.50.1980">
    <property type="entry name" value="Nitrogenase molybdenum iron protein domain"/>
    <property type="match status" value="2"/>
</dbReference>
<dbReference type="HAMAP" id="MF_01024">
    <property type="entry name" value="HisD"/>
    <property type="match status" value="1"/>
</dbReference>
<dbReference type="InterPro" id="IPR016161">
    <property type="entry name" value="Ald_DH/histidinol_DH"/>
</dbReference>
<dbReference type="InterPro" id="IPR001692">
    <property type="entry name" value="Histidinol_DH_CS"/>
</dbReference>
<dbReference type="InterPro" id="IPR022695">
    <property type="entry name" value="Histidinol_DH_monofunct"/>
</dbReference>
<dbReference type="InterPro" id="IPR012131">
    <property type="entry name" value="Hstdl_DH"/>
</dbReference>
<dbReference type="NCBIfam" id="TIGR00069">
    <property type="entry name" value="hisD"/>
    <property type="match status" value="1"/>
</dbReference>
<dbReference type="PANTHER" id="PTHR21256:SF2">
    <property type="entry name" value="HISTIDINE BIOSYNTHESIS TRIFUNCTIONAL PROTEIN"/>
    <property type="match status" value="1"/>
</dbReference>
<dbReference type="PANTHER" id="PTHR21256">
    <property type="entry name" value="HISTIDINOL DEHYDROGENASE HDH"/>
    <property type="match status" value="1"/>
</dbReference>
<dbReference type="Pfam" id="PF00815">
    <property type="entry name" value="Histidinol_dh"/>
    <property type="match status" value="1"/>
</dbReference>
<dbReference type="PIRSF" id="PIRSF000099">
    <property type="entry name" value="Histidinol_dh"/>
    <property type="match status" value="1"/>
</dbReference>
<dbReference type="PRINTS" id="PR00083">
    <property type="entry name" value="HOLDHDRGNASE"/>
</dbReference>
<dbReference type="SUPFAM" id="SSF53720">
    <property type="entry name" value="ALDH-like"/>
    <property type="match status" value="1"/>
</dbReference>
<dbReference type="PROSITE" id="PS00611">
    <property type="entry name" value="HISOL_DEHYDROGENASE"/>
    <property type="match status" value="1"/>
</dbReference>
<sequence>MLTIKNWQLLSENDKKLCLSRPRQSSAIKENVLEIINQVQLSGDKALYDLTKQFDRVNLQYLQVPQETIEQANIPQNALNAITQAIGTISSYHQSLLPENTEISTASGITIRNVYRPIQKVGLYVPGGNKTPLVSSLLMQAIPAKVAGCPIKVLCTPPDAEGEINEHILVAARLCGIDTIYAIGGAQAIAAMAYGTESVIKVDKIFGPGNSYVTQAKTLVAIDANGAAIDMPAGPSEVMILADTEANSEFIAADLLAQAEHGPDSQVILICDECELANQVNQQLEIQMSYLSRIEFIKQSLANSRIIICSNQSEQLDIINSYAPEHLIINRKNPESWVEKIVAAGTVFLGSWAAETMGDYVTGSNHVLPTNGFARNHSGLSTLDFMTRFTVQAINQEAICNLGPAAMALAELEGLDAHANAVQIRLNTLGD</sequence>
<feature type="chain" id="PRO_0000135784" description="Histidinol dehydrogenase">
    <location>
        <begin position="1"/>
        <end position="431"/>
    </location>
</feature>
<feature type="active site" description="Proton acceptor" evidence="1">
    <location>
        <position position="325"/>
    </location>
</feature>
<feature type="active site" description="Proton acceptor" evidence="1">
    <location>
        <position position="326"/>
    </location>
</feature>
<feature type="binding site" evidence="1">
    <location>
        <position position="124"/>
    </location>
    <ligand>
        <name>NAD(+)</name>
        <dbReference type="ChEBI" id="CHEBI:57540"/>
    </ligand>
</feature>
<feature type="binding site" evidence="1">
    <location>
        <position position="187"/>
    </location>
    <ligand>
        <name>NAD(+)</name>
        <dbReference type="ChEBI" id="CHEBI:57540"/>
    </ligand>
</feature>
<feature type="binding site" evidence="1">
    <location>
        <position position="210"/>
    </location>
    <ligand>
        <name>NAD(+)</name>
        <dbReference type="ChEBI" id="CHEBI:57540"/>
    </ligand>
</feature>
<feature type="binding site" evidence="1">
    <location>
        <position position="236"/>
    </location>
    <ligand>
        <name>substrate</name>
    </ligand>
</feature>
<feature type="binding site" evidence="1">
    <location>
        <position position="258"/>
    </location>
    <ligand>
        <name>substrate</name>
    </ligand>
</feature>
<feature type="binding site" evidence="1">
    <location>
        <position position="258"/>
    </location>
    <ligand>
        <name>Zn(2+)</name>
        <dbReference type="ChEBI" id="CHEBI:29105"/>
    </ligand>
</feature>
<feature type="binding site" evidence="1">
    <location>
        <position position="261"/>
    </location>
    <ligand>
        <name>substrate</name>
    </ligand>
</feature>
<feature type="binding site" evidence="1">
    <location>
        <position position="261"/>
    </location>
    <ligand>
        <name>Zn(2+)</name>
        <dbReference type="ChEBI" id="CHEBI:29105"/>
    </ligand>
</feature>
<feature type="binding site" evidence="1">
    <location>
        <position position="326"/>
    </location>
    <ligand>
        <name>substrate</name>
    </ligand>
</feature>
<feature type="binding site" evidence="1">
    <location>
        <position position="359"/>
    </location>
    <ligand>
        <name>substrate</name>
    </ligand>
</feature>
<feature type="binding site" evidence="1">
    <location>
        <position position="359"/>
    </location>
    <ligand>
        <name>Zn(2+)</name>
        <dbReference type="ChEBI" id="CHEBI:29105"/>
    </ligand>
</feature>
<feature type="binding site" evidence="1">
    <location>
        <position position="413"/>
    </location>
    <ligand>
        <name>substrate</name>
    </ligand>
</feature>
<feature type="binding site" evidence="1">
    <location>
        <position position="418"/>
    </location>
    <ligand>
        <name>substrate</name>
    </ligand>
</feature>
<feature type="binding site" evidence="1">
    <location>
        <position position="418"/>
    </location>
    <ligand>
        <name>Zn(2+)</name>
        <dbReference type="ChEBI" id="CHEBI:29105"/>
    </ligand>
</feature>
<evidence type="ECO:0000255" key="1">
    <source>
        <dbReference type="HAMAP-Rule" id="MF_01024"/>
    </source>
</evidence>
<organism>
    <name type="scientific">Legionella pneumophila (strain Lens)</name>
    <dbReference type="NCBI Taxonomy" id="297245"/>
    <lineage>
        <taxon>Bacteria</taxon>
        <taxon>Pseudomonadati</taxon>
        <taxon>Pseudomonadota</taxon>
        <taxon>Gammaproteobacteria</taxon>
        <taxon>Legionellales</taxon>
        <taxon>Legionellaceae</taxon>
        <taxon>Legionella</taxon>
    </lineage>
</organism>
<accession>Q5WX91</accession>
<keyword id="KW-0028">Amino-acid biosynthesis</keyword>
<keyword id="KW-0368">Histidine biosynthesis</keyword>
<keyword id="KW-0479">Metal-binding</keyword>
<keyword id="KW-0520">NAD</keyword>
<keyword id="KW-0560">Oxidoreductase</keyword>
<keyword id="KW-0862">Zinc</keyword>
<reference key="1">
    <citation type="journal article" date="2004" name="Nat. Genet.">
        <title>Evidence in the Legionella pneumophila genome for exploitation of host cell functions and high genome plasticity.</title>
        <authorList>
            <person name="Cazalet C."/>
            <person name="Rusniok C."/>
            <person name="Brueggemann H."/>
            <person name="Zidane N."/>
            <person name="Magnier A."/>
            <person name="Ma L."/>
            <person name="Tichit M."/>
            <person name="Jarraud S."/>
            <person name="Bouchier C."/>
            <person name="Vandenesch F."/>
            <person name="Kunst F."/>
            <person name="Etienne J."/>
            <person name="Glaser P."/>
            <person name="Buchrieser C."/>
        </authorList>
    </citation>
    <scope>NUCLEOTIDE SEQUENCE [LARGE SCALE GENOMIC DNA]</scope>
    <source>
        <strain>Lens</strain>
    </source>
</reference>
<name>HISX_LEGPL</name>
<gene>
    <name evidence="1" type="primary">hisD</name>
    <name type="ordered locus">lpl1207</name>
</gene>
<comment type="function">
    <text evidence="1">Catalyzes the sequential NAD-dependent oxidations of L-histidinol to L-histidinaldehyde and then to L-histidine.</text>
</comment>
<comment type="catalytic activity">
    <reaction evidence="1">
        <text>L-histidinol + 2 NAD(+) + H2O = L-histidine + 2 NADH + 3 H(+)</text>
        <dbReference type="Rhea" id="RHEA:20641"/>
        <dbReference type="ChEBI" id="CHEBI:15377"/>
        <dbReference type="ChEBI" id="CHEBI:15378"/>
        <dbReference type="ChEBI" id="CHEBI:57540"/>
        <dbReference type="ChEBI" id="CHEBI:57595"/>
        <dbReference type="ChEBI" id="CHEBI:57699"/>
        <dbReference type="ChEBI" id="CHEBI:57945"/>
        <dbReference type="EC" id="1.1.1.23"/>
    </reaction>
</comment>
<comment type="cofactor">
    <cofactor evidence="1">
        <name>Zn(2+)</name>
        <dbReference type="ChEBI" id="CHEBI:29105"/>
    </cofactor>
    <text evidence="1">Binds 1 zinc ion per subunit.</text>
</comment>
<comment type="pathway">
    <text evidence="1">Amino-acid biosynthesis; L-histidine biosynthesis; L-histidine from 5-phospho-alpha-D-ribose 1-diphosphate: step 9/9.</text>
</comment>
<comment type="similarity">
    <text evidence="1">Belongs to the histidinol dehydrogenase family.</text>
</comment>